<organism>
    <name type="scientific">Methylobacterium nodulans (strain LMG 21967 / CNCM I-2342 / ORS 2060)</name>
    <dbReference type="NCBI Taxonomy" id="460265"/>
    <lineage>
        <taxon>Bacteria</taxon>
        <taxon>Pseudomonadati</taxon>
        <taxon>Pseudomonadota</taxon>
        <taxon>Alphaproteobacteria</taxon>
        <taxon>Hyphomicrobiales</taxon>
        <taxon>Methylobacteriaceae</taxon>
        <taxon>Methylobacterium</taxon>
    </lineage>
</organism>
<keyword id="KW-0001">2Fe-2S</keyword>
<keyword id="KW-0004">4Fe-4S</keyword>
<keyword id="KW-0093">Biotin biosynthesis</keyword>
<keyword id="KW-0408">Iron</keyword>
<keyword id="KW-0411">Iron-sulfur</keyword>
<keyword id="KW-0479">Metal-binding</keyword>
<keyword id="KW-1185">Reference proteome</keyword>
<keyword id="KW-0949">S-adenosyl-L-methionine</keyword>
<keyword id="KW-0808">Transferase</keyword>
<accession>B8IU36</accession>
<comment type="function">
    <text evidence="1">Catalyzes the conversion of dethiobiotin (DTB) to biotin by the insertion of a sulfur atom into dethiobiotin via a radical-based mechanism.</text>
</comment>
<comment type="catalytic activity">
    <reaction evidence="1">
        <text>(4R,5S)-dethiobiotin + (sulfur carrier)-SH + 2 reduced [2Fe-2S]-[ferredoxin] + 2 S-adenosyl-L-methionine = (sulfur carrier)-H + biotin + 2 5'-deoxyadenosine + 2 L-methionine + 2 oxidized [2Fe-2S]-[ferredoxin]</text>
        <dbReference type="Rhea" id="RHEA:22060"/>
        <dbReference type="Rhea" id="RHEA-COMP:10000"/>
        <dbReference type="Rhea" id="RHEA-COMP:10001"/>
        <dbReference type="Rhea" id="RHEA-COMP:14737"/>
        <dbReference type="Rhea" id="RHEA-COMP:14739"/>
        <dbReference type="ChEBI" id="CHEBI:17319"/>
        <dbReference type="ChEBI" id="CHEBI:29917"/>
        <dbReference type="ChEBI" id="CHEBI:33737"/>
        <dbReference type="ChEBI" id="CHEBI:33738"/>
        <dbReference type="ChEBI" id="CHEBI:57586"/>
        <dbReference type="ChEBI" id="CHEBI:57844"/>
        <dbReference type="ChEBI" id="CHEBI:59789"/>
        <dbReference type="ChEBI" id="CHEBI:64428"/>
        <dbReference type="ChEBI" id="CHEBI:149473"/>
        <dbReference type="EC" id="2.8.1.6"/>
    </reaction>
</comment>
<comment type="cofactor">
    <cofactor evidence="1">
        <name>[4Fe-4S] cluster</name>
        <dbReference type="ChEBI" id="CHEBI:49883"/>
    </cofactor>
    <text evidence="1">Binds 1 [4Fe-4S] cluster. The cluster is coordinated with 3 cysteines and an exchangeable S-adenosyl-L-methionine.</text>
</comment>
<comment type="cofactor">
    <cofactor evidence="1">
        <name>[2Fe-2S] cluster</name>
        <dbReference type="ChEBI" id="CHEBI:190135"/>
    </cofactor>
    <text evidence="1">Binds 1 [2Fe-2S] cluster. The cluster is coordinated with 3 cysteines and 1 arginine.</text>
</comment>
<comment type="pathway">
    <text evidence="1">Cofactor biosynthesis; biotin biosynthesis; biotin from 7,8-diaminononanoate: step 2/2.</text>
</comment>
<comment type="subunit">
    <text evidence="1">Homodimer.</text>
</comment>
<comment type="similarity">
    <text evidence="1">Belongs to the radical SAM superfamily. Biotin synthase family.</text>
</comment>
<protein>
    <recommendedName>
        <fullName evidence="1">Biotin synthase</fullName>
        <ecNumber evidence="1">2.8.1.6</ecNumber>
    </recommendedName>
</protein>
<sequence length="333" mass="35558">MTTTTERPDAPIRHDWTVAEIQAIYDLPLLDLVHRASLVHRAHHDPADIQRASLLSIKTGGCPEDCAYCPQSAHHKEAGIGRQRLMPVEAVLREAEAAKAAGATRFCMGAAWRQPKDGPEFDAVLAMVRGVRGLGMEACVTLGMLTPSQAERLAEAGLTAYNHNLDTGPDFYGDIISTRTYADRLNTLQAVRDAGIGVCCGGIIGMGEGVADRAAMLQVLANHAPHPESVPINALVAVAGTPLAERPPVDPLDLVRMCATARIVMPKARVRLSAGRRALTREAQVLCFLAGANSIFYGERLLTTANNEADADAQLLRDIGVPVPGIEVLEAAE</sequence>
<dbReference type="EC" id="2.8.1.6" evidence="1"/>
<dbReference type="EMBL" id="CP001349">
    <property type="protein sequence ID" value="ACL60894.1"/>
    <property type="molecule type" value="Genomic_DNA"/>
</dbReference>
<dbReference type="RefSeq" id="WP_015932487.1">
    <property type="nucleotide sequence ID" value="NC_011894.1"/>
</dbReference>
<dbReference type="SMR" id="B8IU36"/>
<dbReference type="STRING" id="460265.Mnod_6069"/>
<dbReference type="KEGG" id="mno:Mnod_6069"/>
<dbReference type="eggNOG" id="COG0502">
    <property type="taxonomic scope" value="Bacteria"/>
</dbReference>
<dbReference type="HOGENOM" id="CLU_033172_1_2_5"/>
<dbReference type="OrthoDB" id="9786826at2"/>
<dbReference type="UniPathway" id="UPA00078">
    <property type="reaction ID" value="UER00162"/>
</dbReference>
<dbReference type="Proteomes" id="UP000008207">
    <property type="component" value="Chromosome"/>
</dbReference>
<dbReference type="GO" id="GO:0051537">
    <property type="term" value="F:2 iron, 2 sulfur cluster binding"/>
    <property type="evidence" value="ECO:0007669"/>
    <property type="project" value="UniProtKB-KW"/>
</dbReference>
<dbReference type="GO" id="GO:0051539">
    <property type="term" value="F:4 iron, 4 sulfur cluster binding"/>
    <property type="evidence" value="ECO:0007669"/>
    <property type="project" value="UniProtKB-KW"/>
</dbReference>
<dbReference type="GO" id="GO:0004076">
    <property type="term" value="F:biotin synthase activity"/>
    <property type="evidence" value="ECO:0007669"/>
    <property type="project" value="UniProtKB-UniRule"/>
</dbReference>
<dbReference type="GO" id="GO:0005506">
    <property type="term" value="F:iron ion binding"/>
    <property type="evidence" value="ECO:0007669"/>
    <property type="project" value="UniProtKB-UniRule"/>
</dbReference>
<dbReference type="GO" id="GO:0009102">
    <property type="term" value="P:biotin biosynthetic process"/>
    <property type="evidence" value="ECO:0007669"/>
    <property type="project" value="UniProtKB-UniRule"/>
</dbReference>
<dbReference type="CDD" id="cd01335">
    <property type="entry name" value="Radical_SAM"/>
    <property type="match status" value="1"/>
</dbReference>
<dbReference type="Gene3D" id="3.20.20.70">
    <property type="entry name" value="Aldolase class I"/>
    <property type="match status" value="1"/>
</dbReference>
<dbReference type="HAMAP" id="MF_01694">
    <property type="entry name" value="BioB"/>
    <property type="match status" value="1"/>
</dbReference>
<dbReference type="InterPro" id="IPR013785">
    <property type="entry name" value="Aldolase_TIM"/>
</dbReference>
<dbReference type="InterPro" id="IPR010722">
    <property type="entry name" value="BATS_dom"/>
</dbReference>
<dbReference type="InterPro" id="IPR002684">
    <property type="entry name" value="Biotin_synth/BioAB"/>
</dbReference>
<dbReference type="InterPro" id="IPR024177">
    <property type="entry name" value="Biotin_synthase"/>
</dbReference>
<dbReference type="InterPro" id="IPR006638">
    <property type="entry name" value="Elp3/MiaA/NifB-like_rSAM"/>
</dbReference>
<dbReference type="InterPro" id="IPR007197">
    <property type="entry name" value="rSAM"/>
</dbReference>
<dbReference type="NCBIfam" id="TIGR00433">
    <property type="entry name" value="bioB"/>
    <property type="match status" value="1"/>
</dbReference>
<dbReference type="PANTHER" id="PTHR22976">
    <property type="entry name" value="BIOTIN SYNTHASE"/>
    <property type="match status" value="1"/>
</dbReference>
<dbReference type="PANTHER" id="PTHR22976:SF2">
    <property type="entry name" value="BIOTIN SYNTHASE, MITOCHONDRIAL"/>
    <property type="match status" value="1"/>
</dbReference>
<dbReference type="Pfam" id="PF06968">
    <property type="entry name" value="BATS"/>
    <property type="match status" value="1"/>
</dbReference>
<dbReference type="Pfam" id="PF04055">
    <property type="entry name" value="Radical_SAM"/>
    <property type="match status" value="1"/>
</dbReference>
<dbReference type="PIRSF" id="PIRSF001619">
    <property type="entry name" value="Biotin_synth"/>
    <property type="match status" value="1"/>
</dbReference>
<dbReference type="SFLD" id="SFLDG01060">
    <property type="entry name" value="BATS_domain_containing"/>
    <property type="match status" value="1"/>
</dbReference>
<dbReference type="SFLD" id="SFLDF00272">
    <property type="entry name" value="biotin_synthase"/>
    <property type="match status" value="1"/>
</dbReference>
<dbReference type="SMART" id="SM00876">
    <property type="entry name" value="BATS"/>
    <property type="match status" value="1"/>
</dbReference>
<dbReference type="SMART" id="SM00729">
    <property type="entry name" value="Elp3"/>
    <property type="match status" value="1"/>
</dbReference>
<dbReference type="SUPFAM" id="SSF102114">
    <property type="entry name" value="Radical SAM enzymes"/>
    <property type="match status" value="1"/>
</dbReference>
<dbReference type="PROSITE" id="PS51918">
    <property type="entry name" value="RADICAL_SAM"/>
    <property type="match status" value="1"/>
</dbReference>
<gene>
    <name evidence="1" type="primary">bioB</name>
    <name type="ordered locus">Mnod_6069</name>
</gene>
<reference key="1">
    <citation type="submission" date="2009-01" db="EMBL/GenBank/DDBJ databases">
        <title>Complete sequence of chromosome of Methylobacterium nodulans ORS 2060.</title>
        <authorList>
            <consortium name="US DOE Joint Genome Institute"/>
            <person name="Lucas S."/>
            <person name="Copeland A."/>
            <person name="Lapidus A."/>
            <person name="Glavina del Rio T."/>
            <person name="Dalin E."/>
            <person name="Tice H."/>
            <person name="Bruce D."/>
            <person name="Goodwin L."/>
            <person name="Pitluck S."/>
            <person name="Sims D."/>
            <person name="Brettin T."/>
            <person name="Detter J.C."/>
            <person name="Han C."/>
            <person name="Larimer F."/>
            <person name="Land M."/>
            <person name="Hauser L."/>
            <person name="Kyrpides N."/>
            <person name="Ivanova N."/>
            <person name="Marx C.J."/>
            <person name="Richardson P."/>
        </authorList>
    </citation>
    <scope>NUCLEOTIDE SEQUENCE [LARGE SCALE GENOMIC DNA]</scope>
    <source>
        <strain>LMG 21967 / CNCM I-2342 / ORS 2060</strain>
    </source>
</reference>
<feature type="chain" id="PRO_0000381467" description="Biotin synthase">
    <location>
        <begin position="1"/>
        <end position="333"/>
    </location>
</feature>
<feature type="domain" description="Radical SAM core" evidence="2">
    <location>
        <begin position="47"/>
        <end position="276"/>
    </location>
</feature>
<feature type="binding site" evidence="1">
    <location>
        <position position="62"/>
    </location>
    <ligand>
        <name>[4Fe-4S] cluster</name>
        <dbReference type="ChEBI" id="CHEBI:49883"/>
        <note>4Fe-4S-S-AdoMet</note>
    </ligand>
</feature>
<feature type="binding site" evidence="1">
    <location>
        <position position="66"/>
    </location>
    <ligand>
        <name>[4Fe-4S] cluster</name>
        <dbReference type="ChEBI" id="CHEBI:49883"/>
        <note>4Fe-4S-S-AdoMet</note>
    </ligand>
</feature>
<feature type="binding site" evidence="1">
    <location>
        <position position="69"/>
    </location>
    <ligand>
        <name>[4Fe-4S] cluster</name>
        <dbReference type="ChEBI" id="CHEBI:49883"/>
        <note>4Fe-4S-S-AdoMet</note>
    </ligand>
</feature>
<feature type="binding site" evidence="1">
    <location>
        <position position="107"/>
    </location>
    <ligand>
        <name>[2Fe-2S] cluster</name>
        <dbReference type="ChEBI" id="CHEBI:190135"/>
    </ligand>
</feature>
<feature type="binding site" evidence="1">
    <location>
        <position position="139"/>
    </location>
    <ligand>
        <name>[2Fe-2S] cluster</name>
        <dbReference type="ChEBI" id="CHEBI:190135"/>
    </ligand>
</feature>
<feature type="binding site" evidence="1">
    <location>
        <position position="199"/>
    </location>
    <ligand>
        <name>[2Fe-2S] cluster</name>
        <dbReference type="ChEBI" id="CHEBI:190135"/>
    </ligand>
</feature>
<feature type="binding site" evidence="1">
    <location>
        <position position="271"/>
    </location>
    <ligand>
        <name>[2Fe-2S] cluster</name>
        <dbReference type="ChEBI" id="CHEBI:190135"/>
    </ligand>
</feature>
<proteinExistence type="inferred from homology"/>
<name>BIOB_METNO</name>
<evidence type="ECO:0000255" key="1">
    <source>
        <dbReference type="HAMAP-Rule" id="MF_01694"/>
    </source>
</evidence>
<evidence type="ECO:0000255" key="2">
    <source>
        <dbReference type="PROSITE-ProRule" id="PRU01266"/>
    </source>
</evidence>